<feature type="propeptide" id="PRO_0000355760" evidence="1">
    <location>
        <begin position="1"/>
        <end position="2"/>
    </location>
</feature>
<feature type="chain" id="PRO_0000355761" description="Ribulose bisphosphate carboxylase large chain">
    <location>
        <begin position="3"/>
        <end position="475"/>
    </location>
</feature>
<feature type="active site" description="Proton acceptor" evidence="1">
    <location>
        <position position="175"/>
    </location>
</feature>
<feature type="active site" description="Proton acceptor" evidence="1">
    <location>
        <position position="294"/>
    </location>
</feature>
<feature type="binding site" description="in homodimeric partner" evidence="1">
    <location>
        <position position="123"/>
    </location>
    <ligand>
        <name>substrate</name>
    </ligand>
</feature>
<feature type="binding site" evidence="1">
    <location>
        <position position="173"/>
    </location>
    <ligand>
        <name>substrate</name>
    </ligand>
</feature>
<feature type="binding site" evidence="1">
    <location>
        <position position="177"/>
    </location>
    <ligand>
        <name>substrate</name>
    </ligand>
</feature>
<feature type="binding site" description="via carbamate group" evidence="1">
    <location>
        <position position="201"/>
    </location>
    <ligand>
        <name>Mg(2+)</name>
        <dbReference type="ChEBI" id="CHEBI:18420"/>
    </ligand>
</feature>
<feature type="binding site" evidence="1">
    <location>
        <position position="203"/>
    </location>
    <ligand>
        <name>Mg(2+)</name>
        <dbReference type="ChEBI" id="CHEBI:18420"/>
    </ligand>
</feature>
<feature type="binding site" evidence="1">
    <location>
        <position position="204"/>
    </location>
    <ligand>
        <name>Mg(2+)</name>
        <dbReference type="ChEBI" id="CHEBI:18420"/>
    </ligand>
</feature>
<feature type="binding site" evidence="1">
    <location>
        <position position="295"/>
    </location>
    <ligand>
        <name>substrate</name>
    </ligand>
</feature>
<feature type="binding site" evidence="1">
    <location>
        <position position="327"/>
    </location>
    <ligand>
        <name>substrate</name>
    </ligand>
</feature>
<feature type="binding site" evidence="1">
    <location>
        <position position="379"/>
    </location>
    <ligand>
        <name>substrate</name>
    </ligand>
</feature>
<feature type="site" description="Transition state stabilizer" evidence="1">
    <location>
        <position position="334"/>
    </location>
</feature>
<feature type="modified residue" description="N-acetylproline" evidence="1">
    <location>
        <position position="3"/>
    </location>
</feature>
<feature type="modified residue" description="N6,N6,N6-trimethyllysine" evidence="1">
    <location>
        <position position="14"/>
    </location>
</feature>
<feature type="modified residue" description="N6-carboxylysine" evidence="1">
    <location>
        <position position="201"/>
    </location>
</feature>
<feature type="disulfide bond" description="Interchain; in linked form" evidence="1">
    <location>
        <position position="247"/>
    </location>
</feature>
<geneLocation type="chloroplast"/>
<organism>
    <name type="scientific">Buxus microphylla</name>
    <name type="common">Littleleaf boxwood</name>
    <name type="synonym">Japanese boxwood</name>
    <dbReference type="NCBI Taxonomy" id="153571"/>
    <lineage>
        <taxon>Eukaryota</taxon>
        <taxon>Viridiplantae</taxon>
        <taxon>Streptophyta</taxon>
        <taxon>Embryophyta</taxon>
        <taxon>Tracheophyta</taxon>
        <taxon>Spermatophyta</taxon>
        <taxon>Magnoliopsida</taxon>
        <taxon>Buxales</taxon>
        <taxon>Buxaceae</taxon>
        <taxon>Buxus</taxon>
    </lineage>
</organism>
<accession>A6MM44</accession>
<proteinExistence type="inferred from homology"/>
<evidence type="ECO:0000255" key="1">
    <source>
        <dbReference type="HAMAP-Rule" id="MF_01338"/>
    </source>
</evidence>
<dbReference type="EC" id="4.1.1.39" evidence="1"/>
<dbReference type="EMBL" id="EF380351">
    <property type="protein sequence ID" value="ABQ45257.1"/>
    <property type="molecule type" value="Genomic_DNA"/>
</dbReference>
<dbReference type="RefSeq" id="YP_001294192.1">
    <property type="nucleotide sequence ID" value="NC_009599.1"/>
</dbReference>
<dbReference type="SMR" id="A6MM44"/>
<dbReference type="GeneID" id="5236879"/>
<dbReference type="GO" id="GO:0009507">
    <property type="term" value="C:chloroplast"/>
    <property type="evidence" value="ECO:0007669"/>
    <property type="project" value="UniProtKB-SubCell"/>
</dbReference>
<dbReference type="GO" id="GO:0000287">
    <property type="term" value="F:magnesium ion binding"/>
    <property type="evidence" value="ECO:0007669"/>
    <property type="project" value="UniProtKB-UniRule"/>
</dbReference>
<dbReference type="GO" id="GO:0004497">
    <property type="term" value="F:monooxygenase activity"/>
    <property type="evidence" value="ECO:0007669"/>
    <property type="project" value="UniProtKB-KW"/>
</dbReference>
<dbReference type="GO" id="GO:0016984">
    <property type="term" value="F:ribulose-bisphosphate carboxylase activity"/>
    <property type="evidence" value="ECO:0007669"/>
    <property type="project" value="UniProtKB-UniRule"/>
</dbReference>
<dbReference type="GO" id="GO:0009853">
    <property type="term" value="P:photorespiration"/>
    <property type="evidence" value="ECO:0007669"/>
    <property type="project" value="UniProtKB-KW"/>
</dbReference>
<dbReference type="GO" id="GO:0019253">
    <property type="term" value="P:reductive pentose-phosphate cycle"/>
    <property type="evidence" value="ECO:0007669"/>
    <property type="project" value="UniProtKB-UniRule"/>
</dbReference>
<dbReference type="CDD" id="cd08212">
    <property type="entry name" value="RuBisCO_large_I"/>
    <property type="match status" value="1"/>
</dbReference>
<dbReference type="FunFam" id="3.20.20.110:FF:000001">
    <property type="entry name" value="Ribulose bisphosphate carboxylase large chain"/>
    <property type="match status" value="1"/>
</dbReference>
<dbReference type="FunFam" id="3.30.70.150:FF:000001">
    <property type="entry name" value="Ribulose bisphosphate carboxylase large chain"/>
    <property type="match status" value="1"/>
</dbReference>
<dbReference type="Gene3D" id="3.20.20.110">
    <property type="entry name" value="Ribulose bisphosphate carboxylase, large subunit, C-terminal domain"/>
    <property type="match status" value="1"/>
</dbReference>
<dbReference type="Gene3D" id="3.30.70.150">
    <property type="entry name" value="RuBisCO large subunit, N-terminal domain"/>
    <property type="match status" value="1"/>
</dbReference>
<dbReference type="HAMAP" id="MF_01338">
    <property type="entry name" value="RuBisCO_L_type1"/>
    <property type="match status" value="1"/>
</dbReference>
<dbReference type="InterPro" id="IPR033966">
    <property type="entry name" value="RuBisCO"/>
</dbReference>
<dbReference type="InterPro" id="IPR020878">
    <property type="entry name" value="RuBisCo_large_chain_AS"/>
</dbReference>
<dbReference type="InterPro" id="IPR000685">
    <property type="entry name" value="RuBisCO_lsu_C"/>
</dbReference>
<dbReference type="InterPro" id="IPR036376">
    <property type="entry name" value="RuBisCO_lsu_C_sf"/>
</dbReference>
<dbReference type="InterPro" id="IPR017443">
    <property type="entry name" value="RuBisCO_lsu_fd_N"/>
</dbReference>
<dbReference type="InterPro" id="IPR036422">
    <property type="entry name" value="RuBisCO_lsu_N_sf"/>
</dbReference>
<dbReference type="InterPro" id="IPR020888">
    <property type="entry name" value="RuBisCO_lsuI"/>
</dbReference>
<dbReference type="NCBIfam" id="NF003252">
    <property type="entry name" value="PRK04208.1"/>
    <property type="match status" value="1"/>
</dbReference>
<dbReference type="PANTHER" id="PTHR42704">
    <property type="entry name" value="RIBULOSE BISPHOSPHATE CARBOXYLASE"/>
    <property type="match status" value="1"/>
</dbReference>
<dbReference type="PANTHER" id="PTHR42704:SF15">
    <property type="entry name" value="RIBULOSE BISPHOSPHATE CARBOXYLASE LARGE CHAIN"/>
    <property type="match status" value="1"/>
</dbReference>
<dbReference type="Pfam" id="PF00016">
    <property type="entry name" value="RuBisCO_large"/>
    <property type="match status" value="1"/>
</dbReference>
<dbReference type="Pfam" id="PF02788">
    <property type="entry name" value="RuBisCO_large_N"/>
    <property type="match status" value="1"/>
</dbReference>
<dbReference type="SFLD" id="SFLDG01052">
    <property type="entry name" value="RuBisCO"/>
    <property type="match status" value="1"/>
</dbReference>
<dbReference type="SFLD" id="SFLDS00014">
    <property type="entry name" value="RuBisCO"/>
    <property type="match status" value="1"/>
</dbReference>
<dbReference type="SFLD" id="SFLDG00301">
    <property type="entry name" value="RuBisCO-like_proteins"/>
    <property type="match status" value="1"/>
</dbReference>
<dbReference type="SUPFAM" id="SSF51649">
    <property type="entry name" value="RuBisCo, C-terminal domain"/>
    <property type="match status" value="1"/>
</dbReference>
<dbReference type="SUPFAM" id="SSF54966">
    <property type="entry name" value="RuBisCO, large subunit, small (N-terminal) domain"/>
    <property type="match status" value="1"/>
</dbReference>
<dbReference type="PROSITE" id="PS00157">
    <property type="entry name" value="RUBISCO_LARGE"/>
    <property type="match status" value="1"/>
</dbReference>
<protein>
    <recommendedName>
        <fullName evidence="1">Ribulose bisphosphate carboxylase large chain</fullName>
        <shortName evidence="1">RuBisCO large subunit</shortName>
        <ecNumber evidence="1">4.1.1.39</ecNumber>
    </recommendedName>
</protein>
<comment type="function">
    <text evidence="1">RuBisCO catalyzes two reactions: the carboxylation of D-ribulose 1,5-bisphosphate, the primary event in carbon dioxide fixation, as well as the oxidative fragmentation of the pentose substrate in the photorespiration process. Both reactions occur simultaneously and in competition at the same active site.</text>
</comment>
<comment type="catalytic activity">
    <reaction evidence="1">
        <text>2 (2R)-3-phosphoglycerate + 2 H(+) = D-ribulose 1,5-bisphosphate + CO2 + H2O</text>
        <dbReference type="Rhea" id="RHEA:23124"/>
        <dbReference type="ChEBI" id="CHEBI:15377"/>
        <dbReference type="ChEBI" id="CHEBI:15378"/>
        <dbReference type="ChEBI" id="CHEBI:16526"/>
        <dbReference type="ChEBI" id="CHEBI:57870"/>
        <dbReference type="ChEBI" id="CHEBI:58272"/>
        <dbReference type="EC" id="4.1.1.39"/>
    </reaction>
</comment>
<comment type="catalytic activity">
    <reaction evidence="1">
        <text>D-ribulose 1,5-bisphosphate + O2 = 2-phosphoglycolate + (2R)-3-phosphoglycerate + 2 H(+)</text>
        <dbReference type="Rhea" id="RHEA:36631"/>
        <dbReference type="ChEBI" id="CHEBI:15378"/>
        <dbReference type="ChEBI" id="CHEBI:15379"/>
        <dbReference type="ChEBI" id="CHEBI:57870"/>
        <dbReference type="ChEBI" id="CHEBI:58033"/>
        <dbReference type="ChEBI" id="CHEBI:58272"/>
    </reaction>
</comment>
<comment type="cofactor">
    <cofactor evidence="1">
        <name>Mg(2+)</name>
        <dbReference type="ChEBI" id="CHEBI:18420"/>
    </cofactor>
    <text evidence="1">Binds 1 Mg(2+) ion per subunit.</text>
</comment>
<comment type="subunit">
    <text evidence="1">Heterohexadecamer of 8 large chains and 8 small chains; disulfide-linked. The disulfide link is formed within the large subunit homodimers.</text>
</comment>
<comment type="subcellular location">
    <subcellularLocation>
        <location>Plastid</location>
        <location>Chloroplast</location>
    </subcellularLocation>
</comment>
<comment type="PTM">
    <text evidence="1">The disulfide bond which can form in the large chain dimeric partners within the hexadecamer appears to be associated with oxidative stress and protein turnover.</text>
</comment>
<comment type="miscellaneous">
    <text evidence="1">The basic functional RuBisCO is composed of a large chain homodimer in a 'head-to-tail' conformation. In form I RuBisCO this homodimer is arranged in a barrel-like tetramer with the small subunits forming a tetrameric 'cap' on each end of the 'barrel'.</text>
</comment>
<comment type="similarity">
    <text evidence="1">Belongs to the RuBisCO large chain family. Type I subfamily.</text>
</comment>
<keyword id="KW-0007">Acetylation</keyword>
<keyword id="KW-0113">Calvin cycle</keyword>
<keyword id="KW-0120">Carbon dioxide fixation</keyword>
<keyword id="KW-0150">Chloroplast</keyword>
<keyword id="KW-1015">Disulfide bond</keyword>
<keyword id="KW-0456">Lyase</keyword>
<keyword id="KW-0460">Magnesium</keyword>
<keyword id="KW-0479">Metal-binding</keyword>
<keyword id="KW-0488">Methylation</keyword>
<keyword id="KW-0503">Monooxygenase</keyword>
<keyword id="KW-0560">Oxidoreductase</keyword>
<keyword id="KW-0601">Photorespiration</keyword>
<keyword id="KW-0602">Photosynthesis</keyword>
<keyword id="KW-0934">Plastid</keyword>
<name>RBL_BUXMI</name>
<gene>
    <name evidence="1" type="primary">rbcL</name>
</gene>
<sequence>MSPQTETKASVGFKAGVKDYKLTYYTPEYQTKDTDILAAFRVTPQPGVPPEEAGAAVAAESSTGTWTTVWTDGLTSLDRYKGRCYHIEPVAGEENQFIAYVAYPLDLFEEGSVTNMFTSIVGNVFGFKALRALRLEDLRVPPAYSKTFQGPPHGIQVERDKLNKYGRPLLGCTIKPKLGLSAKNYGRAVYECLRGGLDFTKDDENVNSQPFMRWRDRFVFCAEAIYKAQAETGEIKGHYLNATAGTCEEMIKRAVFARELGVPIVMHDYLTGGFTANTSLAHYCRDNGLLLHIHRAMHAVIDRQKNHGIHFRVLAKALRMSGGDHIHAGTVVGKLEGERDITLGFVDLLRDDFIEKDRSRGIYFTQDWVSLPGVLPVASGGIHVWHMPALTEIFGDDSVLQFGGGTLGHPWGNAPGAVANRVALEACVQARNEGRDLAREGNEIIREASKWSPELAAACEVWKEIKFEFPAMDTL</sequence>
<reference key="1">
    <citation type="journal article" date="2007" name="Mol. Phylogenet. Evol.">
        <title>Phylogenetic and evolutionary implications of complete chloroplast genome sequences of four early-diverging angiosperms: Buxus (Buxaceae), Chloranthus (Chloranthaceae), Dioscorea (Dioscoreaceae), and Illicium (Schisandraceae).</title>
        <authorList>
            <person name="Hansen D.R."/>
            <person name="Dastidar S.G."/>
            <person name="Cai Z."/>
            <person name="Penaflor C."/>
            <person name="Kuehl J.V."/>
            <person name="Boore J.L."/>
            <person name="Jansen R.K."/>
        </authorList>
    </citation>
    <scope>NUCLEOTIDE SEQUENCE [LARGE SCALE GENOMIC DNA]</scope>
</reference>